<accession>Q8NGC1</accession>
<accession>Q6IF09</accession>
<accession>Q96R33</accession>
<sequence length="345" mass="38871">MHFLSQNDLNINLIPHLCLHRHSVIAGAFTIHRHMKIFNSPSNSSTFTGFILLGFPCPREGQILLFVLFTVVYLLTLMGNGSIICAVHWDQRLHAPMYILLANFSFLEICYVTSTVPSMLANFLSDTKIISFSGCFLQFYFFFSLGSTECFFLAVMAFDRYLAICRPLRYPTIMTRRLCTNLVVNCWVLGFIWFLIPIVNISQMSFCGSRIIDHFLCDPAPLLTLTCKKGPVIELVFSVLSPLPVFMLFLFIVGSYALVVRAVLRVPSAAGRRKAFSTCGSHLAVVSLFYGSVLVMYGSPPSKNEAGKQKTVTLFYSVVTPLLNPVIYSLRNKDMRKALKKFWGT</sequence>
<protein>
    <recommendedName>
        <fullName>Olfactory receptor 11G2</fullName>
    </recommendedName>
    <alternativeName>
        <fullName>Olfactory receptor OR14-34</fullName>
    </alternativeName>
</protein>
<feature type="chain" id="PRO_0000150723" description="Olfactory receptor 11G2">
    <location>
        <begin position="1"/>
        <end position="345"/>
    </location>
</feature>
<feature type="topological domain" description="Extracellular" evidence="1">
    <location>
        <begin position="1"/>
        <end position="62"/>
    </location>
</feature>
<feature type="transmembrane region" description="Helical; Name=1" evidence="1">
    <location>
        <begin position="63"/>
        <end position="83"/>
    </location>
</feature>
<feature type="topological domain" description="Cytoplasmic" evidence="1">
    <location>
        <begin position="84"/>
        <end position="92"/>
    </location>
</feature>
<feature type="transmembrane region" description="Helical; Name=2" evidence="1">
    <location>
        <begin position="93"/>
        <end position="113"/>
    </location>
</feature>
<feature type="topological domain" description="Extracellular" evidence="1">
    <location>
        <begin position="114"/>
        <end position="135"/>
    </location>
</feature>
<feature type="transmembrane region" description="Helical; Name=3" evidence="1">
    <location>
        <begin position="136"/>
        <end position="156"/>
    </location>
</feature>
<feature type="topological domain" description="Cytoplasmic" evidence="1">
    <location>
        <begin position="157"/>
        <end position="181"/>
    </location>
</feature>
<feature type="transmembrane region" description="Helical; Name=4" evidence="1">
    <location>
        <begin position="182"/>
        <end position="202"/>
    </location>
</feature>
<feature type="topological domain" description="Extracellular" evidence="1">
    <location>
        <begin position="203"/>
        <end position="241"/>
    </location>
</feature>
<feature type="transmembrane region" description="Helical; Name=5" evidence="1">
    <location>
        <begin position="242"/>
        <end position="264"/>
    </location>
</feature>
<feature type="topological domain" description="Cytoplasmic" evidence="1">
    <location>
        <begin position="265"/>
        <end position="275"/>
    </location>
</feature>
<feature type="transmembrane region" description="Helical; Name=6" evidence="1">
    <location>
        <begin position="276"/>
        <end position="296"/>
    </location>
</feature>
<feature type="topological domain" description="Extracellular" evidence="1">
    <location>
        <begin position="297"/>
        <end position="309"/>
    </location>
</feature>
<feature type="transmembrane region" description="Helical; Name=7" evidence="1">
    <location>
        <begin position="310"/>
        <end position="330"/>
    </location>
</feature>
<feature type="topological domain" description="Cytoplasmic" evidence="1">
    <location>
        <begin position="331"/>
        <end position="345"/>
    </location>
</feature>
<feature type="glycosylation site" description="N-linked (GlcNAc...) asparagine" evidence="1">
    <location>
        <position position="43"/>
    </location>
</feature>
<feature type="disulfide bond" evidence="2">
    <location>
        <begin position="135"/>
        <end position="217"/>
    </location>
</feature>
<feature type="sequence variant" id="VAR_047237" description="In dbSNP:rs4981822.">
    <original>I</original>
    <variation>N</variation>
    <location>
        <position position="99"/>
    </location>
</feature>
<feature type="sequence variant" id="VAR_047238" description="In dbSNP:rs4981088.">
    <original>V</original>
    <variation>I</variation>
    <location>
        <position position="116"/>
    </location>
</feature>
<dbReference type="EMBL" id="AB065897">
    <property type="protein sequence ID" value="BAC06113.1"/>
    <property type="status" value="ALT_INIT"/>
    <property type="molecule type" value="Genomic_DNA"/>
</dbReference>
<dbReference type="EMBL" id="AL356019">
    <property type="status" value="NOT_ANNOTATED_CDS"/>
    <property type="molecule type" value="Genomic_DNA"/>
</dbReference>
<dbReference type="EMBL" id="AF399610">
    <property type="protein sequence ID" value="AAK95095.1"/>
    <property type="molecule type" value="Genomic_DNA"/>
</dbReference>
<dbReference type="EMBL" id="BK004453">
    <property type="protein sequence ID" value="DAA04851.1"/>
    <property type="molecule type" value="Genomic_DNA"/>
</dbReference>
<dbReference type="RefSeq" id="NP_001005503.1">
    <property type="nucleotide sequence ID" value="NM_001005503.1"/>
</dbReference>
<dbReference type="SMR" id="Q8NGC1"/>
<dbReference type="BioGRID" id="133566">
    <property type="interactions" value="10"/>
</dbReference>
<dbReference type="FunCoup" id="Q8NGC1">
    <property type="interactions" value="417"/>
</dbReference>
<dbReference type="IntAct" id="Q8NGC1">
    <property type="interactions" value="4"/>
</dbReference>
<dbReference type="STRING" id="9606.ENSP00000349930"/>
<dbReference type="GlyCosmos" id="Q8NGC1">
    <property type="glycosylation" value="1 site, No reported glycans"/>
</dbReference>
<dbReference type="GlyGen" id="Q8NGC1">
    <property type="glycosylation" value="1 site"/>
</dbReference>
<dbReference type="iPTMnet" id="Q8NGC1"/>
<dbReference type="PhosphoSitePlus" id="Q8NGC1"/>
<dbReference type="BioMuta" id="OR11G2"/>
<dbReference type="DMDM" id="212276448"/>
<dbReference type="jPOST" id="Q8NGC1"/>
<dbReference type="PaxDb" id="9606-ENSP00000349930"/>
<dbReference type="Antibodypedia" id="57320">
    <property type="antibodies" value="46 antibodies from 15 providers"/>
</dbReference>
<dbReference type="DNASU" id="390439"/>
<dbReference type="GeneID" id="390439"/>
<dbReference type="KEGG" id="hsa:390439"/>
<dbReference type="UCSC" id="uc010tlb.3">
    <property type="organism name" value="human"/>
</dbReference>
<dbReference type="AGR" id="HGNC:15346"/>
<dbReference type="CTD" id="390439"/>
<dbReference type="DisGeNET" id="390439"/>
<dbReference type="GeneCards" id="OR11G2"/>
<dbReference type="HGNC" id="HGNC:15346">
    <property type="gene designation" value="OR11G2"/>
</dbReference>
<dbReference type="neXtProt" id="NX_Q8NGC1"/>
<dbReference type="PharmGKB" id="PA32012"/>
<dbReference type="VEuPathDB" id="HostDB:ENSG00000196832"/>
<dbReference type="eggNOG" id="ENOG502QVH7">
    <property type="taxonomic scope" value="Eukaryota"/>
</dbReference>
<dbReference type="HOGENOM" id="CLU_012526_8_1_1"/>
<dbReference type="InParanoid" id="Q8NGC1"/>
<dbReference type="OrthoDB" id="9445499at2759"/>
<dbReference type="PAN-GO" id="Q8NGC1">
    <property type="GO annotations" value="0 GO annotations based on evolutionary models"/>
</dbReference>
<dbReference type="PhylomeDB" id="Q8NGC1"/>
<dbReference type="TreeFam" id="TF337213"/>
<dbReference type="PathwayCommons" id="Q8NGC1"/>
<dbReference type="Reactome" id="R-HSA-9752946">
    <property type="pathway name" value="Expression and translocation of olfactory receptors"/>
</dbReference>
<dbReference type="BioGRID-ORCS" id="390439">
    <property type="hits" value="11 hits in 708 CRISPR screens"/>
</dbReference>
<dbReference type="ChiTaRS" id="OR11G2">
    <property type="organism name" value="human"/>
</dbReference>
<dbReference type="GeneWiki" id="OR11G2"/>
<dbReference type="GenomeRNAi" id="390439"/>
<dbReference type="Pharos" id="Q8NGC1">
    <property type="development level" value="Tdark"/>
</dbReference>
<dbReference type="PRO" id="PR:Q8NGC1"/>
<dbReference type="Proteomes" id="UP000005640">
    <property type="component" value="Chromosome 14"/>
</dbReference>
<dbReference type="RNAct" id="Q8NGC1">
    <property type="molecule type" value="protein"/>
</dbReference>
<dbReference type="GO" id="GO:0005886">
    <property type="term" value="C:plasma membrane"/>
    <property type="evidence" value="ECO:0007669"/>
    <property type="project" value="UniProtKB-SubCell"/>
</dbReference>
<dbReference type="GO" id="GO:0004930">
    <property type="term" value="F:G protein-coupled receptor activity"/>
    <property type="evidence" value="ECO:0007669"/>
    <property type="project" value="UniProtKB-KW"/>
</dbReference>
<dbReference type="GO" id="GO:0004984">
    <property type="term" value="F:olfactory receptor activity"/>
    <property type="evidence" value="ECO:0007669"/>
    <property type="project" value="InterPro"/>
</dbReference>
<dbReference type="CDD" id="cd15913">
    <property type="entry name" value="7tmA_OR11G-like"/>
    <property type="match status" value="1"/>
</dbReference>
<dbReference type="FunFam" id="1.20.1070.10:FF:000001">
    <property type="entry name" value="Olfactory receptor"/>
    <property type="match status" value="1"/>
</dbReference>
<dbReference type="Gene3D" id="1.20.1070.10">
    <property type="entry name" value="Rhodopsin 7-helix transmembrane proteins"/>
    <property type="match status" value="1"/>
</dbReference>
<dbReference type="InterPro" id="IPR000276">
    <property type="entry name" value="GPCR_Rhodpsn"/>
</dbReference>
<dbReference type="InterPro" id="IPR017452">
    <property type="entry name" value="GPCR_Rhodpsn_7TM"/>
</dbReference>
<dbReference type="InterPro" id="IPR000725">
    <property type="entry name" value="Olfact_rcpt"/>
</dbReference>
<dbReference type="InterPro" id="IPR050939">
    <property type="entry name" value="Olfactory_GPCR1"/>
</dbReference>
<dbReference type="PANTHER" id="PTHR24242">
    <property type="entry name" value="G-PROTEIN COUPLED RECEPTOR"/>
    <property type="match status" value="1"/>
</dbReference>
<dbReference type="PANTHER" id="PTHR24242:SF183">
    <property type="entry name" value="OLFACTORY RECEPTOR 11G2"/>
    <property type="match status" value="1"/>
</dbReference>
<dbReference type="Pfam" id="PF13853">
    <property type="entry name" value="7tm_4"/>
    <property type="match status" value="1"/>
</dbReference>
<dbReference type="PRINTS" id="PR00237">
    <property type="entry name" value="GPCRRHODOPSN"/>
</dbReference>
<dbReference type="PRINTS" id="PR00245">
    <property type="entry name" value="OLFACTORYR"/>
</dbReference>
<dbReference type="SUPFAM" id="SSF81321">
    <property type="entry name" value="Family A G protein-coupled receptor-like"/>
    <property type="match status" value="1"/>
</dbReference>
<dbReference type="PROSITE" id="PS00237">
    <property type="entry name" value="G_PROTEIN_RECEP_F1_1"/>
    <property type="match status" value="2"/>
</dbReference>
<dbReference type="PROSITE" id="PS50262">
    <property type="entry name" value="G_PROTEIN_RECEP_F1_2"/>
    <property type="match status" value="1"/>
</dbReference>
<reference key="1">
    <citation type="submission" date="2001-07" db="EMBL/GenBank/DDBJ databases">
        <title>Genome-wide discovery and analysis of human seven transmembrane helix receptor genes.</title>
        <authorList>
            <person name="Suwa M."/>
            <person name="Sato T."/>
            <person name="Okouchi I."/>
            <person name="Arita M."/>
            <person name="Futami K."/>
            <person name="Matsumoto S."/>
            <person name="Tsutsumi S."/>
            <person name="Aburatani H."/>
            <person name="Asai K."/>
            <person name="Akiyama Y."/>
        </authorList>
    </citation>
    <scope>NUCLEOTIDE SEQUENCE [GENOMIC DNA]</scope>
</reference>
<reference key="2">
    <citation type="journal article" date="2003" name="Nature">
        <title>The DNA sequence and analysis of human chromosome 14.</title>
        <authorList>
            <person name="Heilig R."/>
            <person name="Eckenberg R."/>
            <person name="Petit J.-L."/>
            <person name="Fonknechten N."/>
            <person name="Da Silva C."/>
            <person name="Cattolico L."/>
            <person name="Levy M."/>
            <person name="Barbe V."/>
            <person name="De Berardinis V."/>
            <person name="Ureta-Vidal A."/>
            <person name="Pelletier E."/>
            <person name="Vico V."/>
            <person name="Anthouard V."/>
            <person name="Rowen L."/>
            <person name="Madan A."/>
            <person name="Qin S."/>
            <person name="Sun H."/>
            <person name="Du H."/>
            <person name="Pepin K."/>
            <person name="Artiguenave F."/>
            <person name="Robert C."/>
            <person name="Cruaud C."/>
            <person name="Bruels T."/>
            <person name="Jaillon O."/>
            <person name="Friedlander L."/>
            <person name="Samson G."/>
            <person name="Brottier P."/>
            <person name="Cure S."/>
            <person name="Segurens B."/>
            <person name="Aniere F."/>
            <person name="Samain S."/>
            <person name="Crespeau H."/>
            <person name="Abbasi N."/>
            <person name="Aiach N."/>
            <person name="Boscus D."/>
            <person name="Dickhoff R."/>
            <person name="Dors M."/>
            <person name="Dubois I."/>
            <person name="Friedman C."/>
            <person name="Gouyvenoux M."/>
            <person name="James R."/>
            <person name="Madan A."/>
            <person name="Mairey-Estrada B."/>
            <person name="Mangenot S."/>
            <person name="Martins N."/>
            <person name="Menard M."/>
            <person name="Oztas S."/>
            <person name="Ratcliffe A."/>
            <person name="Shaffer T."/>
            <person name="Trask B."/>
            <person name="Vacherie B."/>
            <person name="Bellemere C."/>
            <person name="Belser C."/>
            <person name="Besnard-Gonnet M."/>
            <person name="Bartol-Mavel D."/>
            <person name="Boutard M."/>
            <person name="Briez-Silla S."/>
            <person name="Combette S."/>
            <person name="Dufosse-Laurent V."/>
            <person name="Ferron C."/>
            <person name="Lechaplais C."/>
            <person name="Louesse C."/>
            <person name="Muselet D."/>
            <person name="Magdelenat G."/>
            <person name="Pateau E."/>
            <person name="Petit E."/>
            <person name="Sirvain-Trukniewicz P."/>
            <person name="Trybou A."/>
            <person name="Vega-Czarny N."/>
            <person name="Bataille E."/>
            <person name="Bluet E."/>
            <person name="Bordelais I."/>
            <person name="Dubois M."/>
            <person name="Dumont C."/>
            <person name="Guerin T."/>
            <person name="Haffray S."/>
            <person name="Hammadi R."/>
            <person name="Muanga J."/>
            <person name="Pellouin V."/>
            <person name="Robert D."/>
            <person name="Wunderle E."/>
            <person name="Gauguet G."/>
            <person name="Roy A."/>
            <person name="Sainte-Marthe L."/>
            <person name="Verdier J."/>
            <person name="Verdier-Discala C."/>
            <person name="Hillier L.W."/>
            <person name="Fulton L."/>
            <person name="McPherson J."/>
            <person name="Matsuda F."/>
            <person name="Wilson R."/>
            <person name="Scarpelli C."/>
            <person name="Gyapay G."/>
            <person name="Wincker P."/>
            <person name="Saurin W."/>
            <person name="Quetier F."/>
            <person name="Waterston R."/>
            <person name="Hood L."/>
            <person name="Weissenbach J."/>
        </authorList>
    </citation>
    <scope>NUCLEOTIDE SEQUENCE [LARGE SCALE GENOMIC DNA]</scope>
</reference>
<reference key="3">
    <citation type="journal article" date="2002" name="Genomics">
        <title>DEFOG: a practical scheme for deciphering families of genes.</title>
        <authorList>
            <person name="Fuchs T."/>
            <person name="Malecova B."/>
            <person name="Linhart C."/>
            <person name="Sharan R."/>
            <person name="Khen M."/>
            <person name="Herwig R."/>
            <person name="Shmulevich D."/>
            <person name="Elkon R."/>
            <person name="Steinfath M."/>
            <person name="O'Brien J.K."/>
            <person name="Radelof U."/>
            <person name="Lehrach H."/>
            <person name="Lancet D."/>
            <person name="Shamir R."/>
        </authorList>
    </citation>
    <scope>NUCLEOTIDE SEQUENCE [GENOMIC DNA] OF 106-322</scope>
</reference>
<reference key="4">
    <citation type="journal article" date="2004" name="Proc. Natl. Acad. Sci. U.S.A.">
        <title>The human olfactory receptor gene family.</title>
        <authorList>
            <person name="Malnic B."/>
            <person name="Godfrey P.A."/>
            <person name="Buck L.B."/>
        </authorList>
    </citation>
    <scope>IDENTIFICATION</scope>
</reference>
<reference key="5">
    <citation type="journal article" date="2004" name="Proc. Natl. Acad. Sci. U.S.A.">
        <authorList>
            <person name="Malnic B."/>
            <person name="Godfrey P.A."/>
            <person name="Buck L.B."/>
        </authorList>
    </citation>
    <scope>ERRATUM OF PUBMED:14983052</scope>
</reference>
<evidence type="ECO:0000255" key="1"/>
<evidence type="ECO:0000255" key="2">
    <source>
        <dbReference type="PROSITE-ProRule" id="PRU00521"/>
    </source>
</evidence>
<evidence type="ECO:0000305" key="3"/>
<gene>
    <name type="primary">OR11G2</name>
</gene>
<name>O11G2_HUMAN</name>
<comment type="function">
    <text evidence="3">Odorant receptor.</text>
</comment>
<comment type="subcellular location">
    <subcellularLocation>
        <location>Cell membrane</location>
        <topology>Multi-pass membrane protein</topology>
    </subcellularLocation>
</comment>
<comment type="similarity">
    <text evidence="2">Belongs to the G-protein coupled receptor 1 family.</text>
</comment>
<comment type="caution">
    <text evidence="3">It is uncertain whether Met-1 or Met-35 is the initiator.</text>
</comment>
<comment type="sequence caution" evidence="3">
    <conflict type="erroneous initiation">
        <sequence resource="EMBL-CDS" id="BAC06113"/>
    </conflict>
</comment>
<comment type="online information" name="Human Olfactory Receptor Data Exploratorium (HORDE)">
    <link uri="http://genome.weizmann.ac.il/horde/card/index/symbol:OR11G2"/>
</comment>
<proteinExistence type="inferred from homology"/>
<keyword id="KW-1003">Cell membrane</keyword>
<keyword id="KW-1015">Disulfide bond</keyword>
<keyword id="KW-0297">G-protein coupled receptor</keyword>
<keyword id="KW-0325">Glycoprotein</keyword>
<keyword id="KW-0472">Membrane</keyword>
<keyword id="KW-0552">Olfaction</keyword>
<keyword id="KW-0675">Receptor</keyword>
<keyword id="KW-1185">Reference proteome</keyword>
<keyword id="KW-0716">Sensory transduction</keyword>
<keyword id="KW-0807">Transducer</keyword>
<keyword id="KW-0812">Transmembrane</keyword>
<keyword id="KW-1133">Transmembrane helix</keyword>
<organism>
    <name type="scientific">Homo sapiens</name>
    <name type="common">Human</name>
    <dbReference type="NCBI Taxonomy" id="9606"/>
    <lineage>
        <taxon>Eukaryota</taxon>
        <taxon>Metazoa</taxon>
        <taxon>Chordata</taxon>
        <taxon>Craniata</taxon>
        <taxon>Vertebrata</taxon>
        <taxon>Euteleostomi</taxon>
        <taxon>Mammalia</taxon>
        <taxon>Eutheria</taxon>
        <taxon>Euarchontoglires</taxon>
        <taxon>Primates</taxon>
        <taxon>Haplorrhini</taxon>
        <taxon>Catarrhini</taxon>
        <taxon>Hominidae</taxon>
        <taxon>Homo</taxon>
    </lineage>
</organism>